<name>RTCB_PLAF7</name>
<reference key="1">
    <citation type="journal article" date="2002" name="Nature">
        <title>Genome sequence of the human malaria parasite Plasmodium falciparum.</title>
        <authorList>
            <person name="Gardner M.J."/>
            <person name="Hall N."/>
            <person name="Fung E."/>
            <person name="White O."/>
            <person name="Berriman M."/>
            <person name="Hyman R.W."/>
            <person name="Carlton J.M."/>
            <person name="Pain A."/>
            <person name="Nelson K.E."/>
            <person name="Bowman S."/>
            <person name="Paulsen I.T."/>
            <person name="James K.D."/>
            <person name="Eisen J.A."/>
            <person name="Rutherford K.M."/>
            <person name="Salzberg S.L."/>
            <person name="Craig A."/>
            <person name="Kyes S."/>
            <person name="Chan M.-S."/>
            <person name="Nene V."/>
            <person name="Shallom S.J."/>
            <person name="Suh B."/>
            <person name="Peterson J."/>
            <person name="Angiuoli S."/>
            <person name="Pertea M."/>
            <person name="Allen J."/>
            <person name="Selengut J."/>
            <person name="Haft D."/>
            <person name="Mather M.W."/>
            <person name="Vaidya A.B."/>
            <person name="Martin D.M.A."/>
            <person name="Fairlamb A.H."/>
            <person name="Fraunholz M.J."/>
            <person name="Roos D.S."/>
            <person name="Ralph S.A."/>
            <person name="McFadden G.I."/>
            <person name="Cummings L.M."/>
            <person name="Subramanian G.M."/>
            <person name="Mungall C."/>
            <person name="Venter J.C."/>
            <person name="Carucci D.J."/>
            <person name="Hoffman S.L."/>
            <person name="Newbold C."/>
            <person name="Davis R.W."/>
            <person name="Fraser C.M."/>
            <person name="Barrell B.G."/>
        </authorList>
    </citation>
    <scope>NUCLEOTIDE SEQUENCE [LARGE SCALE GENOMIC DNA]</scope>
    <source>
        <strain>3D7</strain>
    </source>
</reference>
<reference key="2">
    <citation type="journal article" date="2002" name="Nature">
        <title>Sequence of Plasmodium falciparum chromosomes 1, 3-9 and 13.</title>
        <authorList>
            <person name="Hall N."/>
            <person name="Pain A."/>
            <person name="Berriman M."/>
            <person name="Churcher C.M."/>
            <person name="Harris B."/>
            <person name="Harris D."/>
            <person name="Mungall K.L."/>
            <person name="Bowman S."/>
            <person name="Atkin R."/>
            <person name="Baker S."/>
            <person name="Barron A."/>
            <person name="Brooks K."/>
            <person name="Buckee C.O."/>
            <person name="Burrows C."/>
            <person name="Cherevach I."/>
            <person name="Chillingworth C."/>
            <person name="Chillingworth T."/>
            <person name="Christodoulou Z."/>
            <person name="Clark L."/>
            <person name="Clark R."/>
            <person name="Corton C."/>
            <person name="Cronin A."/>
            <person name="Davies R.M."/>
            <person name="Davis P."/>
            <person name="Dear P."/>
            <person name="Dearden F."/>
            <person name="Doggett J."/>
            <person name="Feltwell T."/>
            <person name="Goble A."/>
            <person name="Goodhead I."/>
            <person name="Gwilliam R."/>
            <person name="Hamlin N."/>
            <person name="Hance Z."/>
            <person name="Harper D."/>
            <person name="Hauser H."/>
            <person name="Hornsby T."/>
            <person name="Holroyd S."/>
            <person name="Horrocks P."/>
            <person name="Humphray S."/>
            <person name="Jagels K."/>
            <person name="James K.D."/>
            <person name="Johnson D."/>
            <person name="Kerhornou A."/>
            <person name="Knights A."/>
            <person name="Konfortov B."/>
            <person name="Kyes S."/>
            <person name="Larke N."/>
            <person name="Lawson D."/>
            <person name="Lennard N."/>
            <person name="Line A."/>
            <person name="Maddison M."/>
            <person name="Mclean J."/>
            <person name="Mooney P."/>
            <person name="Moule S."/>
            <person name="Murphy L."/>
            <person name="Oliver K."/>
            <person name="Ormond D."/>
            <person name="Price C."/>
            <person name="Quail M.A."/>
            <person name="Rabbinowitsch E."/>
            <person name="Rajandream M.A."/>
            <person name="Rutter S."/>
            <person name="Rutherford K.M."/>
            <person name="Sanders M."/>
            <person name="Simmonds M."/>
            <person name="Seeger K."/>
            <person name="Sharp S."/>
            <person name="Smith R."/>
            <person name="Squares R."/>
            <person name="Squares S."/>
            <person name="Stevens K."/>
            <person name="Taylor K."/>
            <person name="Tivey A."/>
            <person name="Unwin L."/>
            <person name="Whitehead S."/>
            <person name="Woodward J.R."/>
            <person name="Sulston J.E."/>
            <person name="Craig A."/>
            <person name="Newbold C."/>
            <person name="Barrell B.G."/>
        </authorList>
    </citation>
    <scope>NUCLEOTIDE SEQUENCE [LARGE SCALE GENOMIC DNA]</scope>
</reference>
<gene>
    <name evidence="2" type="primary">RTCB</name>
    <name type="ORF">PF11_0068</name>
    <name type="ORF">PF3D7_1105700</name>
</gene>
<organism>
    <name type="scientific">Plasmodium falciparum (isolate 3D7)</name>
    <dbReference type="NCBI Taxonomy" id="36329"/>
    <lineage>
        <taxon>Eukaryota</taxon>
        <taxon>Sar</taxon>
        <taxon>Alveolata</taxon>
        <taxon>Apicomplexa</taxon>
        <taxon>Aconoidasida</taxon>
        <taxon>Haemosporida</taxon>
        <taxon>Plasmodiidae</taxon>
        <taxon>Plasmodium</taxon>
        <taxon>Plasmodium (Laverania)</taxon>
    </lineage>
</organism>
<accession>Q8IIU6</accession>
<accession>A0A143ZZZ9</accession>
<protein>
    <recommendedName>
        <fullName evidence="1">RNA-splicing ligase RtcB homolog</fullName>
        <ecNumber evidence="1">6.5.1.8</ecNumber>
    </recommendedName>
    <alternativeName>
        <fullName evidence="1">3'-phosphate/5'-hydroxy nucleic acid ligase</fullName>
    </alternativeName>
</protein>
<sequence length="506" mass="56321">MKGIPKRPISNYIEKTNETNLYKIRKGLVNEMNVEGHIYVNEKLKTLLDEEIATYELNKNSTFLPAVMQIANVSTLPGIVKASIALPDVHAGYGFSIGNVAAFDMDNEKAIVSPGGVGFDINCGVRLIRTNLFYEDIKPKQEELTQLLFNHIPVGVGSQGFILCNQENLDDALCLGMDWCVKEGYSWIEDKLNCEDNGRSLYADSNFVSIRAKKRGITQMGTLGAGNHYAEIQIVDQIYDKKSAKLMGIEKKNQVCIMIHSGSRGLGHQIATDALIDMEKSMNKYKINVIDKQLACTPIHSKEGQNYLKAMGSACNFAWINRSSMTFLARQAFSKIFNQSPDDLDMHVIYDVSHNIAKIEEHYIDGKIKKLLVHRKGSTRAFPPFHPLVPLDYQYCGQPILIGGTMGTYSYVLTGNEKAMQATFGSTCHGAGRALSRNKSRNTLSYLDVLNKLKEQNISIRVASPKLIMEEAPESYKNVCDVVQTCHDAGISNKCFRLKPVAVIKG</sequence>
<comment type="function">
    <text evidence="1">Catalytic subunit of the tRNA-splicing ligase complex that acts by directly joining spliced tRNA halves to mature-sized tRNAs by incorporating the precursor-derived splice junction phosphate into the mature tRNA as a canonical 3',5'-phosphodiester. May act as an RNA ligase with broad substrate specificity, and may function toward other RNAs.</text>
</comment>
<comment type="catalytic activity">
    <reaction evidence="1">
        <text>a 3'-end 3'-phospho-ribonucleotide-RNA + a 5'-end dephospho-ribonucleoside-RNA + GTP = a ribonucleotidyl-ribonucleotide-RNA + GMP + diphosphate</text>
        <dbReference type="Rhea" id="RHEA:68076"/>
        <dbReference type="Rhea" id="RHEA-COMP:10463"/>
        <dbReference type="Rhea" id="RHEA-COMP:13936"/>
        <dbReference type="Rhea" id="RHEA-COMP:17355"/>
        <dbReference type="ChEBI" id="CHEBI:33019"/>
        <dbReference type="ChEBI" id="CHEBI:37565"/>
        <dbReference type="ChEBI" id="CHEBI:58115"/>
        <dbReference type="ChEBI" id="CHEBI:83062"/>
        <dbReference type="ChEBI" id="CHEBI:138284"/>
        <dbReference type="ChEBI" id="CHEBI:173118"/>
        <dbReference type="EC" id="6.5.1.8"/>
    </reaction>
</comment>
<comment type="catalytic activity">
    <reaction evidence="1">
        <text>a 3'-end 2',3'-cyclophospho-ribonucleotide-RNA + a 5'-end dephospho-ribonucleoside-RNA + GTP + H2O = a ribonucleotidyl-ribonucleotide-RNA + GMP + diphosphate + H(+)</text>
        <dbReference type="Rhea" id="RHEA:68080"/>
        <dbReference type="Rhea" id="RHEA-COMP:10464"/>
        <dbReference type="Rhea" id="RHEA-COMP:13936"/>
        <dbReference type="Rhea" id="RHEA-COMP:17355"/>
        <dbReference type="ChEBI" id="CHEBI:15377"/>
        <dbReference type="ChEBI" id="CHEBI:15378"/>
        <dbReference type="ChEBI" id="CHEBI:33019"/>
        <dbReference type="ChEBI" id="CHEBI:37565"/>
        <dbReference type="ChEBI" id="CHEBI:58115"/>
        <dbReference type="ChEBI" id="CHEBI:83064"/>
        <dbReference type="ChEBI" id="CHEBI:138284"/>
        <dbReference type="ChEBI" id="CHEBI:173118"/>
        <dbReference type="EC" id="6.5.1.8"/>
    </reaction>
</comment>
<comment type="cofactor">
    <cofactor evidence="1">
        <name>Mn(2+)</name>
        <dbReference type="ChEBI" id="CHEBI:29035"/>
    </cofactor>
    <text evidence="1">Binds 2 manganese ions per subunit.</text>
</comment>
<comment type="subunit">
    <text evidence="1">Catalytic component of the tRNA-splicing ligase complex.</text>
</comment>
<comment type="miscellaneous">
    <text evidence="1">Ligation probably proceeds through 3 nucleotidyl transfer steps, with 2',3'-cyclic phosphate termini being hydrolyzed to 3'-P termini in a step that precedes 3'-P activation with GMP. In the first nucleotidyl transfer step, RTCB reacts with GTP to form a covalent RTCB-histidine-GMP intermediate with release of PPi; in the second step, the GMP moiety is transferred to the RNA 3'-P; in the third step, the 5'-OH from the opposite RNA strand attacks the activated 3'-P to form a 3',5'-phosphodiester bond and release GMP.</text>
</comment>
<comment type="similarity">
    <text evidence="1">Belongs to the RtcB family.</text>
</comment>
<feature type="chain" id="PRO_0000407239" description="RNA-splicing ligase RtcB homolog">
    <location>
        <begin position="1"/>
        <end position="506"/>
    </location>
</feature>
<feature type="active site" description="GMP-histidine intermediate" evidence="1">
    <location>
        <position position="429"/>
    </location>
</feature>
<feature type="binding site" evidence="1">
    <location>
        <position position="120"/>
    </location>
    <ligand>
        <name>Mn(2+)</name>
        <dbReference type="ChEBI" id="CHEBI:29035"/>
        <label>1</label>
    </ligand>
</feature>
<feature type="binding site" evidence="1">
    <location>
        <position position="123"/>
    </location>
    <ligand>
        <name>Mn(2+)</name>
        <dbReference type="ChEBI" id="CHEBI:29035"/>
        <label>1</label>
    </ligand>
</feature>
<feature type="binding site" evidence="1">
    <location>
        <position position="123"/>
    </location>
    <ligand>
        <name>Mn(2+)</name>
        <dbReference type="ChEBI" id="CHEBI:29035"/>
        <label>2</label>
    </ligand>
</feature>
<feature type="binding site" evidence="1">
    <location>
        <begin position="227"/>
        <end position="231"/>
    </location>
    <ligand>
        <name>GMP</name>
        <dbReference type="ChEBI" id="CHEBI:58115"/>
    </ligand>
</feature>
<feature type="binding site" evidence="1">
    <location>
        <position position="228"/>
    </location>
    <ligand>
        <name>Mn(2+)</name>
        <dbReference type="ChEBI" id="CHEBI:29035"/>
        <label>1</label>
    </ligand>
</feature>
<feature type="binding site" evidence="1">
    <location>
        <position position="260"/>
    </location>
    <ligand>
        <name>Mn(2+)</name>
        <dbReference type="ChEBI" id="CHEBI:29035"/>
        <label>2</label>
    </ligand>
</feature>
<feature type="binding site" evidence="1">
    <location>
        <begin position="354"/>
        <end position="355"/>
    </location>
    <ligand>
        <name>GMP</name>
        <dbReference type="ChEBI" id="CHEBI:58115"/>
    </ligand>
</feature>
<feature type="binding site" evidence="1">
    <location>
        <position position="354"/>
    </location>
    <ligand>
        <name>Mn(2+)</name>
        <dbReference type="ChEBI" id="CHEBI:29035"/>
        <label>2</label>
    </ligand>
</feature>
<feature type="binding site" evidence="1">
    <location>
        <begin position="403"/>
        <end position="406"/>
    </location>
    <ligand>
        <name>GMP</name>
        <dbReference type="ChEBI" id="CHEBI:58115"/>
    </ligand>
</feature>
<feature type="binding site" evidence="1">
    <location>
        <position position="410"/>
    </location>
    <ligand>
        <name>GMP</name>
        <dbReference type="ChEBI" id="CHEBI:58115"/>
    </ligand>
</feature>
<feature type="binding site" evidence="1">
    <location>
        <begin position="429"/>
        <end position="432"/>
    </location>
    <ligand>
        <name>GMP</name>
        <dbReference type="ChEBI" id="CHEBI:58115"/>
    </ligand>
</feature>
<feature type="binding site" evidence="1">
    <location>
        <position position="505"/>
    </location>
    <ligand>
        <name>GMP</name>
        <dbReference type="ChEBI" id="CHEBI:58115"/>
    </ligand>
</feature>
<proteinExistence type="inferred from homology"/>
<keyword id="KW-0342">GTP-binding</keyword>
<keyword id="KW-0436">Ligase</keyword>
<keyword id="KW-0464">Manganese</keyword>
<keyword id="KW-0479">Metal-binding</keyword>
<keyword id="KW-0547">Nucleotide-binding</keyword>
<keyword id="KW-1185">Reference proteome</keyword>
<keyword id="KW-0819">tRNA processing</keyword>
<evidence type="ECO:0000255" key="1">
    <source>
        <dbReference type="HAMAP-Rule" id="MF_03144"/>
    </source>
</evidence>
<evidence type="ECO:0000305" key="2"/>
<dbReference type="EC" id="6.5.1.8" evidence="1"/>
<dbReference type="EMBL" id="LN999945">
    <property type="protein sequence ID" value="CZT98723.1"/>
    <property type="molecule type" value="Genomic_DNA"/>
</dbReference>
<dbReference type="RefSeq" id="XP_001347744.1">
    <property type="nucleotide sequence ID" value="XM_001347708.1"/>
</dbReference>
<dbReference type="SMR" id="Q8IIU6"/>
<dbReference type="FunCoup" id="Q8IIU6">
    <property type="interactions" value="270"/>
</dbReference>
<dbReference type="STRING" id="36329.Q8IIU6"/>
<dbReference type="SwissPalm" id="Q8IIU6"/>
<dbReference type="PaxDb" id="5833-PF11_0068"/>
<dbReference type="EnsemblProtists" id="CZT98723">
    <property type="protein sequence ID" value="CZT98723"/>
    <property type="gene ID" value="PF3D7_1105700"/>
</dbReference>
<dbReference type="GeneID" id="810620"/>
<dbReference type="KEGG" id="pfa:PF3D7_1105700"/>
<dbReference type="VEuPathDB" id="PlasmoDB:PF3D7_1105700"/>
<dbReference type="HOGENOM" id="CLU_022279_0_0_1"/>
<dbReference type="InParanoid" id="Q8IIU6"/>
<dbReference type="OMA" id="QTRGVEC"/>
<dbReference type="OrthoDB" id="10249697at2759"/>
<dbReference type="PhylomeDB" id="Q8IIU6"/>
<dbReference type="Proteomes" id="UP000001450">
    <property type="component" value="Chromosome 11"/>
</dbReference>
<dbReference type="GO" id="GO:0005634">
    <property type="term" value="C:nucleus"/>
    <property type="evidence" value="ECO:0000318"/>
    <property type="project" value="GO_Central"/>
</dbReference>
<dbReference type="GO" id="GO:0072669">
    <property type="term" value="C:tRNA-splicing ligase complex"/>
    <property type="evidence" value="ECO:0000318"/>
    <property type="project" value="GO_Central"/>
</dbReference>
<dbReference type="GO" id="GO:0005525">
    <property type="term" value="F:GTP binding"/>
    <property type="evidence" value="ECO:0007669"/>
    <property type="project" value="UniProtKB-KW"/>
</dbReference>
<dbReference type="GO" id="GO:0046872">
    <property type="term" value="F:metal ion binding"/>
    <property type="evidence" value="ECO:0007669"/>
    <property type="project" value="UniProtKB-KW"/>
</dbReference>
<dbReference type="GO" id="GO:0170057">
    <property type="term" value="F:RNA ligase (GTP) activity"/>
    <property type="evidence" value="ECO:0007669"/>
    <property type="project" value="UniProtKB-EC"/>
</dbReference>
<dbReference type="GO" id="GO:0006388">
    <property type="term" value="P:tRNA splicing, via endonucleolytic cleavage and ligation"/>
    <property type="evidence" value="ECO:0000318"/>
    <property type="project" value="GO_Central"/>
</dbReference>
<dbReference type="FunFam" id="3.90.1860.10:FF:000001">
    <property type="entry name" value="tRNA-splicing ligase RtcB homolog"/>
    <property type="match status" value="1"/>
</dbReference>
<dbReference type="Gene3D" id="3.90.1860.10">
    <property type="entry name" value="tRNA-splicing ligase RtcB"/>
    <property type="match status" value="1"/>
</dbReference>
<dbReference type="HAMAP" id="MF_03144">
    <property type="entry name" value="RtcB_euk"/>
    <property type="match status" value="1"/>
</dbReference>
<dbReference type="InterPro" id="IPR001233">
    <property type="entry name" value="RtcB"/>
</dbReference>
<dbReference type="InterPro" id="IPR036025">
    <property type="entry name" value="RtcB-like_sf"/>
</dbReference>
<dbReference type="InterPro" id="IPR027513">
    <property type="entry name" value="RtcB_euk"/>
</dbReference>
<dbReference type="PANTHER" id="PTHR11118">
    <property type="entry name" value="RNA-SPLICING LIGASE RTCB HOMOLOG"/>
    <property type="match status" value="1"/>
</dbReference>
<dbReference type="PANTHER" id="PTHR11118:SF1">
    <property type="entry name" value="RNA-SPLICING LIGASE RTCB HOMOLOG"/>
    <property type="match status" value="1"/>
</dbReference>
<dbReference type="Pfam" id="PF01139">
    <property type="entry name" value="RtcB"/>
    <property type="match status" value="1"/>
</dbReference>
<dbReference type="SUPFAM" id="SSF103365">
    <property type="entry name" value="Hypothetical protein PH1602"/>
    <property type="match status" value="1"/>
</dbReference>